<sequence length="240" mass="26258">MIIFPAIDILDGKCVRLFKGDFNKTTVYENDPVKTAKDFESQGSKYLHIVDLDGAKNPLNRQSEIIKRIALETELNIQTGGGIRSEEQIKDYLDNGVSSVIVGSMAAVEPEKAKGWIKTFGKERIVLSLDVNIVNNEPFVAAYGWQGSSGKNLFDLINGYTLQGLRVLCTDISRDGALQGPNIDLYKNVLNKCPGVELQASGGVAGLNDLIKLKETGVHGVIVGKALYERKFTLREALSI</sequence>
<reference key="1">
    <citation type="journal article" date="2009" name="Appl. Environ. Microbiol.">
        <title>Genomic analysis of 'Elusimicrobium minutum,' the first cultivated representative of the phylum 'Elusimicrobia' (formerly termite group 1).</title>
        <authorList>
            <person name="Herlemann D.P.R."/>
            <person name="Geissinger O."/>
            <person name="Ikeda-Ohtsubo W."/>
            <person name="Kunin V."/>
            <person name="Sun H."/>
            <person name="Lapidus A."/>
            <person name="Hugenholtz P."/>
            <person name="Brune A."/>
        </authorList>
    </citation>
    <scope>NUCLEOTIDE SEQUENCE [LARGE SCALE GENOMIC DNA]</scope>
    <source>
        <strain>Pei191</strain>
    </source>
</reference>
<protein>
    <recommendedName>
        <fullName evidence="1">1-(5-phosphoribosyl)-5-[(5-phosphoribosylamino)methylideneamino] imidazole-4-carboxamide isomerase</fullName>
        <ecNumber evidence="1">5.3.1.16</ecNumber>
    </recommendedName>
    <alternativeName>
        <fullName evidence="1">Phosphoribosylformimino-5-aminoimidazole carboxamide ribotide isomerase</fullName>
    </alternativeName>
</protein>
<dbReference type="EC" id="5.3.1.16" evidence="1"/>
<dbReference type="EMBL" id="CP001055">
    <property type="protein sequence ID" value="ACC98272.1"/>
    <property type="molecule type" value="Genomic_DNA"/>
</dbReference>
<dbReference type="RefSeq" id="WP_012414887.1">
    <property type="nucleotide sequence ID" value="NC_010644.1"/>
</dbReference>
<dbReference type="SMR" id="B2KCM6"/>
<dbReference type="STRING" id="445932.Emin_0717"/>
<dbReference type="KEGG" id="emi:Emin_0717"/>
<dbReference type="HOGENOM" id="CLU_048577_1_2_0"/>
<dbReference type="OrthoDB" id="9781903at2"/>
<dbReference type="UniPathway" id="UPA00031">
    <property type="reaction ID" value="UER00009"/>
</dbReference>
<dbReference type="Proteomes" id="UP000001029">
    <property type="component" value="Chromosome"/>
</dbReference>
<dbReference type="GO" id="GO:0005737">
    <property type="term" value="C:cytoplasm"/>
    <property type="evidence" value="ECO:0007669"/>
    <property type="project" value="UniProtKB-SubCell"/>
</dbReference>
<dbReference type="GO" id="GO:0003949">
    <property type="term" value="F:1-(5-phosphoribosyl)-5-[(5-phosphoribosylamino)methylideneamino]imidazole-4-carboxamide isomerase activity"/>
    <property type="evidence" value="ECO:0007669"/>
    <property type="project" value="UniProtKB-UniRule"/>
</dbReference>
<dbReference type="GO" id="GO:0000105">
    <property type="term" value="P:L-histidine biosynthetic process"/>
    <property type="evidence" value="ECO:0007669"/>
    <property type="project" value="UniProtKB-UniRule"/>
</dbReference>
<dbReference type="GO" id="GO:0000162">
    <property type="term" value="P:L-tryptophan biosynthetic process"/>
    <property type="evidence" value="ECO:0007669"/>
    <property type="project" value="TreeGrafter"/>
</dbReference>
<dbReference type="CDD" id="cd04732">
    <property type="entry name" value="HisA"/>
    <property type="match status" value="1"/>
</dbReference>
<dbReference type="FunFam" id="3.20.20.70:FF:000009">
    <property type="entry name" value="1-(5-phosphoribosyl)-5-[(5-phosphoribosylamino)methylideneamino] imidazole-4-carboxamide isomerase"/>
    <property type="match status" value="1"/>
</dbReference>
<dbReference type="Gene3D" id="3.20.20.70">
    <property type="entry name" value="Aldolase class I"/>
    <property type="match status" value="1"/>
</dbReference>
<dbReference type="HAMAP" id="MF_01014">
    <property type="entry name" value="HisA"/>
    <property type="match status" value="1"/>
</dbReference>
<dbReference type="InterPro" id="IPR013785">
    <property type="entry name" value="Aldolase_TIM"/>
</dbReference>
<dbReference type="InterPro" id="IPR006062">
    <property type="entry name" value="His_biosynth"/>
</dbReference>
<dbReference type="InterPro" id="IPR006063">
    <property type="entry name" value="HisA_bact_arch"/>
</dbReference>
<dbReference type="InterPro" id="IPR044524">
    <property type="entry name" value="Isoase_HisA-like"/>
</dbReference>
<dbReference type="InterPro" id="IPR023016">
    <property type="entry name" value="Isoase_HisA-like_bact"/>
</dbReference>
<dbReference type="InterPro" id="IPR011060">
    <property type="entry name" value="RibuloseP-bd_barrel"/>
</dbReference>
<dbReference type="NCBIfam" id="TIGR00007">
    <property type="entry name" value="1-(5-phosphoribosyl)-5-[(5-phosphoribosylamino)methylideneamino]imidazole-4-carboxamide isomerase"/>
    <property type="match status" value="1"/>
</dbReference>
<dbReference type="PANTHER" id="PTHR43090">
    <property type="entry name" value="1-(5-PHOSPHORIBOSYL)-5-[(5-PHOSPHORIBOSYLAMINO)METHYLIDENEAMINO] IMIDAZOLE-4-CARBOXAMIDE ISOMERASE"/>
    <property type="match status" value="1"/>
</dbReference>
<dbReference type="PANTHER" id="PTHR43090:SF2">
    <property type="entry name" value="1-(5-PHOSPHORIBOSYL)-5-[(5-PHOSPHORIBOSYLAMINO)METHYLIDENEAMINO] IMIDAZOLE-4-CARBOXAMIDE ISOMERASE"/>
    <property type="match status" value="1"/>
</dbReference>
<dbReference type="Pfam" id="PF00977">
    <property type="entry name" value="His_biosynth"/>
    <property type="match status" value="1"/>
</dbReference>
<dbReference type="SUPFAM" id="SSF51366">
    <property type="entry name" value="Ribulose-phoshate binding barrel"/>
    <property type="match status" value="1"/>
</dbReference>
<accession>B2KCM6</accession>
<feature type="chain" id="PRO_1000135116" description="1-(5-phosphoribosyl)-5-[(5-phosphoribosylamino)methylideneamino] imidazole-4-carboxamide isomerase">
    <location>
        <begin position="1"/>
        <end position="240"/>
    </location>
</feature>
<feature type="active site" description="Proton acceptor" evidence="1">
    <location>
        <position position="8"/>
    </location>
</feature>
<feature type="active site" description="Proton donor" evidence="1">
    <location>
        <position position="130"/>
    </location>
</feature>
<comment type="catalytic activity">
    <reaction evidence="1">
        <text>1-(5-phospho-beta-D-ribosyl)-5-[(5-phospho-beta-D-ribosylamino)methylideneamino]imidazole-4-carboxamide = 5-[(5-phospho-1-deoxy-D-ribulos-1-ylimino)methylamino]-1-(5-phospho-beta-D-ribosyl)imidazole-4-carboxamide</text>
        <dbReference type="Rhea" id="RHEA:15469"/>
        <dbReference type="ChEBI" id="CHEBI:58435"/>
        <dbReference type="ChEBI" id="CHEBI:58525"/>
        <dbReference type="EC" id="5.3.1.16"/>
    </reaction>
</comment>
<comment type="pathway">
    <text evidence="1">Amino-acid biosynthesis; L-histidine biosynthesis; L-histidine from 5-phospho-alpha-D-ribose 1-diphosphate: step 4/9.</text>
</comment>
<comment type="subcellular location">
    <subcellularLocation>
        <location evidence="1">Cytoplasm</location>
    </subcellularLocation>
</comment>
<comment type="similarity">
    <text evidence="1">Belongs to the HisA/HisF family.</text>
</comment>
<proteinExistence type="inferred from homology"/>
<organism>
    <name type="scientific">Elusimicrobium minutum (strain Pei191)</name>
    <dbReference type="NCBI Taxonomy" id="445932"/>
    <lineage>
        <taxon>Bacteria</taxon>
        <taxon>Pseudomonadati</taxon>
        <taxon>Elusimicrobiota</taxon>
        <taxon>Elusimicrobia</taxon>
        <taxon>Elusimicrobiales</taxon>
        <taxon>Elusimicrobiaceae</taxon>
        <taxon>Elusimicrobium</taxon>
    </lineage>
</organism>
<evidence type="ECO:0000255" key="1">
    <source>
        <dbReference type="HAMAP-Rule" id="MF_01014"/>
    </source>
</evidence>
<gene>
    <name evidence="1" type="primary">hisA</name>
    <name type="ordered locus">Emin_0717</name>
</gene>
<keyword id="KW-0028">Amino-acid biosynthesis</keyword>
<keyword id="KW-0963">Cytoplasm</keyword>
<keyword id="KW-0368">Histidine biosynthesis</keyword>
<keyword id="KW-0413">Isomerase</keyword>
<keyword id="KW-1185">Reference proteome</keyword>
<name>HIS4_ELUMP</name>